<comment type="function">
    <text evidence="1">Catalyzes the ATP-dependent phosphorylation of L-homoserine to L-homoserine phosphate.</text>
</comment>
<comment type="catalytic activity">
    <reaction evidence="1">
        <text>L-homoserine + ATP = O-phospho-L-homoserine + ADP + H(+)</text>
        <dbReference type="Rhea" id="RHEA:13985"/>
        <dbReference type="ChEBI" id="CHEBI:15378"/>
        <dbReference type="ChEBI" id="CHEBI:30616"/>
        <dbReference type="ChEBI" id="CHEBI:57476"/>
        <dbReference type="ChEBI" id="CHEBI:57590"/>
        <dbReference type="ChEBI" id="CHEBI:456216"/>
        <dbReference type="EC" id="2.7.1.39"/>
    </reaction>
</comment>
<comment type="pathway">
    <text evidence="1">Amino-acid biosynthesis; L-threonine biosynthesis; L-threonine from L-aspartate: step 4/5.</text>
</comment>
<comment type="subcellular location">
    <subcellularLocation>
        <location evidence="1">Cytoplasm</location>
    </subcellularLocation>
</comment>
<comment type="similarity">
    <text evidence="1">Belongs to the GHMP kinase family. Homoserine kinase subfamily.</text>
</comment>
<sequence>MVKIYAPASIGNVSVGFDVLGAAVSPIDGTLLGDCVSVTAAERFSLHNEGRFVSKLPDDPKQNIVYQCWERFCQEMGKEIPVAMVLEKNMPIGSGLGSSACSVVAGLMAMNEFCGQPLDKVTLLGMMGELEGRVSGSIHFDNVAPCYLGGMQLILEQEGYISQDVPGFSDWLWVMAYPGIKVSTAEARAILPAQYRRQDCITHGRNLAGFIHACHTQQPDLAAKMMKDVIAEPYRTQLLPGFAAARQAAQDIGALACGISGSGPTLFAVCNDQATAQRMAGWLQNHYLQNDEGFVHICRLDTAGARLLG</sequence>
<gene>
    <name evidence="1" type="primary">thrB</name>
    <name type="ordered locus">YPN_0332</name>
    <name type="ORF">YP516_0338</name>
</gene>
<organism>
    <name type="scientific">Yersinia pestis bv. Antiqua (strain Nepal516)</name>
    <dbReference type="NCBI Taxonomy" id="377628"/>
    <lineage>
        <taxon>Bacteria</taxon>
        <taxon>Pseudomonadati</taxon>
        <taxon>Pseudomonadota</taxon>
        <taxon>Gammaproteobacteria</taxon>
        <taxon>Enterobacterales</taxon>
        <taxon>Yersiniaceae</taxon>
        <taxon>Yersinia</taxon>
    </lineage>
</organism>
<proteinExistence type="evidence at protein level"/>
<reference key="1">
    <citation type="journal article" date="2006" name="J. Bacteriol.">
        <title>Complete genome sequence of Yersinia pestis strains Antiqua and Nepal516: evidence of gene reduction in an emerging pathogen.</title>
        <authorList>
            <person name="Chain P.S.G."/>
            <person name="Hu P."/>
            <person name="Malfatti S.A."/>
            <person name="Radnedge L."/>
            <person name="Larimer F."/>
            <person name="Vergez L.M."/>
            <person name="Worsham P."/>
            <person name="Chu M.C."/>
            <person name="Andersen G.L."/>
        </authorList>
    </citation>
    <scope>NUCLEOTIDE SEQUENCE [LARGE SCALE GENOMIC DNA]</scope>
    <source>
        <strain>Nepal516</strain>
    </source>
</reference>
<reference key="2">
    <citation type="submission" date="2009-04" db="EMBL/GenBank/DDBJ databases">
        <title>Yersinia pestis Nepal516A whole genome shotgun sequencing project.</title>
        <authorList>
            <person name="Plunkett G. III"/>
            <person name="Anderson B.D."/>
            <person name="Baumler D.J."/>
            <person name="Burland V."/>
            <person name="Cabot E.L."/>
            <person name="Glasner J.D."/>
            <person name="Mau B."/>
            <person name="Neeno-Eckwall E."/>
            <person name="Perna N.T."/>
            <person name="Munk A.C."/>
            <person name="Tapia R."/>
            <person name="Green L.D."/>
            <person name="Rogers Y.C."/>
            <person name="Detter J.C."/>
            <person name="Bruce D.C."/>
            <person name="Brettin T.S."/>
        </authorList>
    </citation>
    <scope>NUCLEOTIDE SEQUENCE [LARGE SCALE GENOMIC DNA]</scope>
    <source>
        <strain>Nepal516</strain>
    </source>
</reference>
<dbReference type="EC" id="2.7.1.39" evidence="1"/>
<dbReference type="EMBL" id="CP000305">
    <property type="protein sequence ID" value="ABG16664.1"/>
    <property type="molecule type" value="Genomic_DNA"/>
</dbReference>
<dbReference type="EMBL" id="ACNQ01000006">
    <property type="protein sequence ID" value="EEO78116.1"/>
    <property type="molecule type" value="Genomic_DNA"/>
</dbReference>
<dbReference type="RefSeq" id="WP_002209238.1">
    <property type="nucleotide sequence ID" value="NZ_ACNQ01000006.1"/>
</dbReference>
<dbReference type="PDB" id="4RPF">
    <property type="method" value="X-ray"/>
    <property type="resolution" value="2.30 A"/>
    <property type="chains" value="A/B/C=1-309"/>
</dbReference>
<dbReference type="PDBsum" id="4RPF"/>
<dbReference type="SMR" id="Q1CMW6"/>
<dbReference type="GeneID" id="96664104"/>
<dbReference type="KEGG" id="ypn:YPN_0332"/>
<dbReference type="HOGENOM" id="CLU_041243_1_1_6"/>
<dbReference type="UniPathway" id="UPA00050">
    <property type="reaction ID" value="UER00064"/>
</dbReference>
<dbReference type="EvolutionaryTrace" id="Q1CMW6"/>
<dbReference type="Proteomes" id="UP000008936">
    <property type="component" value="Chromosome"/>
</dbReference>
<dbReference type="GO" id="GO:0005737">
    <property type="term" value="C:cytoplasm"/>
    <property type="evidence" value="ECO:0007669"/>
    <property type="project" value="UniProtKB-SubCell"/>
</dbReference>
<dbReference type="GO" id="GO:0005524">
    <property type="term" value="F:ATP binding"/>
    <property type="evidence" value="ECO:0007669"/>
    <property type="project" value="UniProtKB-UniRule"/>
</dbReference>
<dbReference type="GO" id="GO:0004413">
    <property type="term" value="F:homoserine kinase activity"/>
    <property type="evidence" value="ECO:0007669"/>
    <property type="project" value="UniProtKB-UniRule"/>
</dbReference>
<dbReference type="GO" id="GO:0009088">
    <property type="term" value="P:threonine biosynthetic process"/>
    <property type="evidence" value="ECO:0007669"/>
    <property type="project" value="UniProtKB-UniRule"/>
</dbReference>
<dbReference type="FunFam" id="3.30.230.10:FF:000020">
    <property type="entry name" value="Homoserine kinase"/>
    <property type="match status" value="1"/>
</dbReference>
<dbReference type="FunFam" id="3.30.70.890:FF:000002">
    <property type="entry name" value="Homoserine kinase"/>
    <property type="match status" value="1"/>
</dbReference>
<dbReference type="Gene3D" id="3.30.230.10">
    <property type="match status" value="1"/>
</dbReference>
<dbReference type="Gene3D" id="3.30.70.890">
    <property type="entry name" value="GHMP kinase, C-terminal domain"/>
    <property type="match status" value="1"/>
</dbReference>
<dbReference type="HAMAP" id="MF_00384">
    <property type="entry name" value="Homoser_kinase"/>
    <property type="match status" value="1"/>
</dbReference>
<dbReference type="InterPro" id="IPR013750">
    <property type="entry name" value="GHMP_kinase_C_dom"/>
</dbReference>
<dbReference type="InterPro" id="IPR036554">
    <property type="entry name" value="GHMP_kinase_C_sf"/>
</dbReference>
<dbReference type="InterPro" id="IPR006204">
    <property type="entry name" value="GHMP_kinase_N_dom"/>
</dbReference>
<dbReference type="InterPro" id="IPR006203">
    <property type="entry name" value="GHMP_knse_ATP-bd_CS"/>
</dbReference>
<dbReference type="InterPro" id="IPR000870">
    <property type="entry name" value="Homoserine_kinase"/>
</dbReference>
<dbReference type="InterPro" id="IPR020568">
    <property type="entry name" value="Ribosomal_Su5_D2-typ_SF"/>
</dbReference>
<dbReference type="InterPro" id="IPR014721">
    <property type="entry name" value="Ribsml_uS5_D2-typ_fold_subgr"/>
</dbReference>
<dbReference type="NCBIfam" id="NF002288">
    <property type="entry name" value="PRK01212.1-4"/>
    <property type="match status" value="1"/>
</dbReference>
<dbReference type="NCBIfam" id="TIGR00191">
    <property type="entry name" value="thrB"/>
    <property type="match status" value="1"/>
</dbReference>
<dbReference type="PANTHER" id="PTHR20861:SF1">
    <property type="entry name" value="HOMOSERINE KINASE"/>
    <property type="match status" value="1"/>
</dbReference>
<dbReference type="PANTHER" id="PTHR20861">
    <property type="entry name" value="HOMOSERINE/4-DIPHOSPHOCYTIDYL-2-C-METHYL-D-ERYTHRITOL KINASE"/>
    <property type="match status" value="1"/>
</dbReference>
<dbReference type="Pfam" id="PF08544">
    <property type="entry name" value="GHMP_kinases_C"/>
    <property type="match status" value="1"/>
</dbReference>
<dbReference type="Pfam" id="PF00288">
    <property type="entry name" value="GHMP_kinases_N"/>
    <property type="match status" value="1"/>
</dbReference>
<dbReference type="PIRSF" id="PIRSF000676">
    <property type="entry name" value="Homoser_kin"/>
    <property type="match status" value="1"/>
</dbReference>
<dbReference type="PRINTS" id="PR00958">
    <property type="entry name" value="HOMSERKINASE"/>
</dbReference>
<dbReference type="SUPFAM" id="SSF55060">
    <property type="entry name" value="GHMP Kinase, C-terminal domain"/>
    <property type="match status" value="1"/>
</dbReference>
<dbReference type="SUPFAM" id="SSF54211">
    <property type="entry name" value="Ribosomal protein S5 domain 2-like"/>
    <property type="match status" value="1"/>
</dbReference>
<dbReference type="PROSITE" id="PS00627">
    <property type="entry name" value="GHMP_KINASES_ATP"/>
    <property type="match status" value="1"/>
</dbReference>
<keyword id="KW-0002">3D-structure</keyword>
<keyword id="KW-0028">Amino-acid biosynthesis</keyword>
<keyword id="KW-0067">ATP-binding</keyword>
<keyword id="KW-0963">Cytoplasm</keyword>
<keyword id="KW-0418">Kinase</keyword>
<keyword id="KW-0547">Nucleotide-binding</keyword>
<keyword id="KW-0791">Threonine biosynthesis</keyword>
<keyword id="KW-0808">Transferase</keyword>
<accession>Q1CMW6</accession>
<accession>C4GNN4</accession>
<protein>
    <recommendedName>
        <fullName evidence="1">Homoserine kinase</fullName>
        <shortName evidence="1">HK</shortName>
        <shortName evidence="1">HSK</shortName>
        <ecNumber evidence="1">2.7.1.39</ecNumber>
    </recommendedName>
</protein>
<feature type="chain" id="PRO_1000049198" description="Homoserine kinase">
    <location>
        <begin position="1"/>
        <end position="309"/>
    </location>
</feature>
<feature type="binding site" evidence="1">
    <location>
        <begin position="91"/>
        <end position="101"/>
    </location>
    <ligand>
        <name>ATP</name>
        <dbReference type="ChEBI" id="CHEBI:30616"/>
    </ligand>
</feature>
<feature type="strand" evidence="2">
    <location>
        <begin position="1"/>
        <end position="12"/>
    </location>
</feature>
<feature type="turn" evidence="2">
    <location>
        <begin position="13"/>
        <end position="15"/>
    </location>
</feature>
<feature type="turn" evidence="2">
    <location>
        <begin position="17"/>
        <end position="19"/>
    </location>
</feature>
<feature type="strand" evidence="2">
    <location>
        <begin position="20"/>
        <end position="26"/>
    </location>
</feature>
<feature type="strand" evidence="2">
    <location>
        <begin position="33"/>
        <end position="40"/>
    </location>
</feature>
<feature type="strand" evidence="2">
    <location>
        <begin position="45"/>
        <end position="50"/>
    </location>
</feature>
<feature type="helix" evidence="2">
    <location>
        <begin position="53"/>
        <end position="55"/>
    </location>
</feature>
<feature type="helix" evidence="2">
    <location>
        <begin position="60"/>
        <end position="62"/>
    </location>
</feature>
<feature type="helix" evidence="2">
    <location>
        <begin position="64"/>
        <end position="76"/>
    </location>
</feature>
<feature type="strand" evidence="2">
    <location>
        <begin position="82"/>
        <end position="87"/>
    </location>
</feature>
<feature type="strand" evidence="2">
    <location>
        <begin position="94"/>
        <end position="96"/>
    </location>
</feature>
<feature type="helix" evidence="2">
    <location>
        <begin position="98"/>
        <end position="113"/>
    </location>
</feature>
<feature type="helix" evidence="2">
    <location>
        <begin position="120"/>
        <end position="135"/>
    </location>
</feature>
<feature type="helix" evidence="2">
    <location>
        <begin position="143"/>
        <end position="148"/>
    </location>
</feature>
<feature type="strand" evidence="2">
    <location>
        <begin position="150"/>
        <end position="157"/>
    </location>
</feature>
<feature type="strand" evidence="2">
    <location>
        <begin position="160"/>
        <end position="165"/>
    </location>
</feature>
<feature type="strand" evidence="2">
    <location>
        <begin position="172"/>
        <end position="177"/>
    </location>
</feature>
<feature type="helix" evidence="2">
    <location>
        <begin position="184"/>
        <end position="189"/>
    </location>
</feature>
<feature type="strand" evidence="2">
    <location>
        <begin position="193"/>
        <end position="196"/>
    </location>
</feature>
<feature type="helix" evidence="2">
    <location>
        <begin position="197"/>
        <end position="215"/>
    </location>
</feature>
<feature type="helix" evidence="2">
    <location>
        <begin position="219"/>
        <end position="225"/>
    </location>
</feature>
<feature type="strand" evidence="2">
    <location>
        <begin position="229"/>
        <end position="231"/>
    </location>
</feature>
<feature type="helix" evidence="2">
    <location>
        <begin position="232"/>
        <end position="235"/>
    </location>
</feature>
<feature type="helix" evidence="2">
    <location>
        <begin position="236"/>
        <end position="238"/>
    </location>
</feature>
<feature type="helix" evidence="2">
    <location>
        <begin position="242"/>
        <end position="252"/>
    </location>
</feature>
<feature type="strand" evidence="2">
    <location>
        <begin position="255"/>
        <end position="259"/>
    </location>
</feature>
<feature type="strand" evidence="2">
    <location>
        <begin position="266"/>
        <end position="272"/>
    </location>
</feature>
<feature type="helix" evidence="2">
    <location>
        <begin position="273"/>
        <end position="286"/>
    </location>
</feature>
<feature type="strand" evidence="2">
    <location>
        <begin position="294"/>
        <end position="300"/>
    </location>
</feature>
<feature type="strand" evidence="2">
    <location>
        <begin position="305"/>
        <end position="307"/>
    </location>
</feature>
<evidence type="ECO:0000255" key="1">
    <source>
        <dbReference type="HAMAP-Rule" id="MF_00384"/>
    </source>
</evidence>
<evidence type="ECO:0007829" key="2">
    <source>
        <dbReference type="PDB" id="4RPF"/>
    </source>
</evidence>
<name>KHSE_YERPN</name>